<evidence type="ECO:0000255" key="1">
    <source>
        <dbReference type="HAMAP-Rule" id="MF_00137"/>
    </source>
</evidence>
<reference key="1">
    <citation type="journal article" date="2004" name="PLoS Biol.">
        <title>Genomic insights into methanotrophy: the complete genome sequence of Methylococcus capsulatus (Bath).</title>
        <authorList>
            <person name="Ward N.L."/>
            <person name="Larsen O."/>
            <person name="Sakwa J."/>
            <person name="Bruseth L."/>
            <person name="Khouri H.M."/>
            <person name="Durkin A.S."/>
            <person name="Dimitrov G."/>
            <person name="Jiang L."/>
            <person name="Scanlan D."/>
            <person name="Kang K.H."/>
            <person name="Lewis M.R."/>
            <person name="Nelson K.E."/>
            <person name="Methe B.A."/>
            <person name="Wu M."/>
            <person name="Heidelberg J.F."/>
            <person name="Paulsen I.T."/>
            <person name="Fouts D.E."/>
            <person name="Ravel J."/>
            <person name="Tettelin H."/>
            <person name="Ren Q."/>
            <person name="Read T.D."/>
            <person name="DeBoy R.T."/>
            <person name="Seshadri R."/>
            <person name="Salzberg S.L."/>
            <person name="Jensen H.B."/>
            <person name="Birkeland N.K."/>
            <person name="Nelson W.C."/>
            <person name="Dodson R.J."/>
            <person name="Grindhaug S.H."/>
            <person name="Holt I.E."/>
            <person name="Eidhammer I."/>
            <person name="Jonasen I."/>
            <person name="Vanaken S."/>
            <person name="Utterback T.R."/>
            <person name="Feldblyum T.V."/>
            <person name="Fraser C.M."/>
            <person name="Lillehaug J.R."/>
            <person name="Eisen J.A."/>
        </authorList>
    </citation>
    <scope>NUCLEOTIDE SEQUENCE [LARGE SCALE GENOMIC DNA]</scope>
    <source>
        <strain>ATCC 33009 / NCIMB 11132 / Bath</strain>
    </source>
</reference>
<accession>Q60CQ5</accession>
<feature type="chain" id="PRO_1000095994" description="Phosphoribosylaminoimidazole-succinocarboxamide synthase">
    <location>
        <begin position="1"/>
        <end position="297"/>
    </location>
</feature>
<keyword id="KW-0067">ATP-binding</keyword>
<keyword id="KW-0436">Ligase</keyword>
<keyword id="KW-0547">Nucleotide-binding</keyword>
<keyword id="KW-0658">Purine biosynthesis</keyword>
<keyword id="KW-1185">Reference proteome</keyword>
<sequence length="297" mass="33209">MTAPETLFESSLSSLRLKARGKVRDIYEAGDDLMLIVTTDRLSAFDVILPDPIPGKGRVLTRVSRFWFERLKDRVPNHLSGTPLEAVLPDPAEREQVEGRAMVVKRLRPLPVEAVVRGYLIGSGWKDYQRSGAVCGIGLPSGLRLAERLPDALFTPSTKAEMGSHDENIGFDQVVGLIGRELAERMREVALGLYREAAAYALDRGIIIADTKFEFGVDEAGVLHWIDEALTPDSSRFWPADGYRPGISPPSFDKQFVRDYLETLEWDKKPPAPHLPPDILARTAEKYREAERRLTGE</sequence>
<gene>
    <name evidence="1" type="primary">purC</name>
    <name type="ordered locus">MCA0021</name>
</gene>
<proteinExistence type="inferred from homology"/>
<dbReference type="EC" id="6.3.2.6" evidence="1"/>
<dbReference type="EMBL" id="AE017282">
    <property type="protein sequence ID" value="AAU90726.1"/>
    <property type="molecule type" value="Genomic_DNA"/>
</dbReference>
<dbReference type="RefSeq" id="WP_010959394.1">
    <property type="nucleotide sequence ID" value="NC_002977.6"/>
</dbReference>
<dbReference type="SMR" id="Q60CQ5"/>
<dbReference type="STRING" id="243233.MCA0021"/>
<dbReference type="GeneID" id="88222374"/>
<dbReference type="KEGG" id="mca:MCA0021"/>
<dbReference type="eggNOG" id="COG0152">
    <property type="taxonomic scope" value="Bacteria"/>
</dbReference>
<dbReference type="HOGENOM" id="CLU_045637_0_0_6"/>
<dbReference type="UniPathway" id="UPA00074">
    <property type="reaction ID" value="UER00131"/>
</dbReference>
<dbReference type="Proteomes" id="UP000006821">
    <property type="component" value="Chromosome"/>
</dbReference>
<dbReference type="GO" id="GO:0005737">
    <property type="term" value="C:cytoplasm"/>
    <property type="evidence" value="ECO:0007669"/>
    <property type="project" value="TreeGrafter"/>
</dbReference>
<dbReference type="GO" id="GO:0005524">
    <property type="term" value="F:ATP binding"/>
    <property type="evidence" value="ECO:0007669"/>
    <property type="project" value="UniProtKB-KW"/>
</dbReference>
<dbReference type="GO" id="GO:0004639">
    <property type="term" value="F:phosphoribosylaminoimidazolesuccinocarboxamide synthase activity"/>
    <property type="evidence" value="ECO:0007669"/>
    <property type="project" value="UniProtKB-UniRule"/>
</dbReference>
<dbReference type="GO" id="GO:0006189">
    <property type="term" value="P:'de novo' IMP biosynthetic process"/>
    <property type="evidence" value="ECO:0007669"/>
    <property type="project" value="UniProtKB-UniRule"/>
</dbReference>
<dbReference type="CDD" id="cd01414">
    <property type="entry name" value="SAICAR_synt_Sc"/>
    <property type="match status" value="1"/>
</dbReference>
<dbReference type="FunFam" id="3.30.470.20:FF:000015">
    <property type="entry name" value="Phosphoribosylaminoimidazole-succinocarboxamide synthase"/>
    <property type="match status" value="1"/>
</dbReference>
<dbReference type="Gene3D" id="3.30.470.20">
    <property type="entry name" value="ATP-grasp fold, B domain"/>
    <property type="match status" value="1"/>
</dbReference>
<dbReference type="Gene3D" id="3.30.200.20">
    <property type="entry name" value="Phosphorylase Kinase, domain 1"/>
    <property type="match status" value="1"/>
</dbReference>
<dbReference type="HAMAP" id="MF_00137">
    <property type="entry name" value="SAICAR_synth"/>
    <property type="match status" value="1"/>
</dbReference>
<dbReference type="InterPro" id="IPR028923">
    <property type="entry name" value="SAICAR_synt/ADE2_N"/>
</dbReference>
<dbReference type="InterPro" id="IPR001636">
    <property type="entry name" value="SAICAR_synth"/>
</dbReference>
<dbReference type="InterPro" id="IPR018236">
    <property type="entry name" value="SAICAR_synthetase_CS"/>
</dbReference>
<dbReference type="NCBIfam" id="NF010568">
    <property type="entry name" value="PRK13961.1"/>
    <property type="match status" value="1"/>
</dbReference>
<dbReference type="NCBIfam" id="TIGR00081">
    <property type="entry name" value="purC"/>
    <property type="match status" value="1"/>
</dbReference>
<dbReference type="PANTHER" id="PTHR43700">
    <property type="entry name" value="PHOSPHORIBOSYLAMINOIMIDAZOLE-SUCCINOCARBOXAMIDE SYNTHASE"/>
    <property type="match status" value="1"/>
</dbReference>
<dbReference type="PANTHER" id="PTHR43700:SF1">
    <property type="entry name" value="PHOSPHORIBOSYLAMINOIMIDAZOLE-SUCCINOCARBOXAMIDE SYNTHASE"/>
    <property type="match status" value="1"/>
</dbReference>
<dbReference type="Pfam" id="PF01259">
    <property type="entry name" value="SAICAR_synt"/>
    <property type="match status" value="1"/>
</dbReference>
<dbReference type="SUPFAM" id="SSF56104">
    <property type="entry name" value="SAICAR synthase-like"/>
    <property type="match status" value="1"/>
</dbReference>
<dbReference type="PROSITE" id="PS01057">
    <property type="entry name" value="SAICAR_SYNTHETASE_1"/>
    <property type="match status" value="1"/>
</dbReference>
<dbReference type="PROSITE" id="PS01058">
    <property type="entry name" value="SAICAR_SYNTHETASE_2"/>
    <property type="match status" value="1"/>
</dbReference>
<comment type="catalytic activity">
    <reaction evidence="1">
        <text>5-amino-1-(5-phospho-D-ribosyl)imidazole-4-carboxylate + L-aspartate + ATP = (2S)-2-[5-amino-1-(5-phospho-beta-D-ribosyl)imidazole-4-carboxamido]succinate + ADP + phosphate + 2 H(+)</text>
        <dbReference type="Rhea" id="RHEA:22628"/>
        <dbReference type="ChEBI" id="CHEBI:15378"/>
        <dbReference type="ChEBI" id="CHEBI:29991"/>
        <dbReference type="ChEBI" id="CHEBI:30616"/>
        <dbReference type="ChEBI" id="CHEBI:43474"/>
        <dbReference type="ChEBI" id="CHEBI:58443"/>
        <dbReference type="ChEBI" id="CHEBI:77657"/>
        <dbReference type="ChEBI" id="CHEBI:456216"/>
        <dbReference type="EC" id="6.3.2.6"/>
    </reaction>
</comment>
<comment type="pathway">
    <text evidence="1">Purine metabolism; IMP biosynthesis via de novo pathway; 5-amino-1-(5-phospho-D-ribosyl)imidazole-4-carboxamide from 5-amino-1-(5-phospho-D-ribosyl)imidazole-4-carboxylate: step 1/2.</text>
</comment>
<comment type="similarity">
    <text evidence="1">Belongs to the SAICAR synthetase family.</text>
</comment>
<organism>
    <name type="scientific">Methylococcus capsulatus (strain ATCC 33009 / NCIMB 11132 / Bath)</name>
    <dbReference type="NCBI Taxonomy" id="243233"/>
    <lineage>
        <taxon>Bacteria</taxon>
        <taxon>Pseudomonadati</taxon>
        <taxon>Pseudomonadota</taxon>
        <taxon>Gammaproteobacteria</taxon>
        <taxon>Methylococcales</taxon>
        <taxon>Methylococcaceae</taxon>
        <taxon>Methylococcus</taxon>
    </lineage>
</organism>
<name>PUR7_METCA</name>
<protein>
    <recommendedName>
        <fullName evidence="1">Phosphoribosylaminoimidazole-succinocarboxamide synthase</fullName>
        <ecNumber evidence="1">6.3.2.6</ecNumber>
    </recommendedName>
    <alternativeName>
        <fullName evidence="1">SAICAR synthetase</fullName>
    </alternativeName>
</protein>